<feature type="chain" id="PRO_1000004557" description="Translation initiation factor IF-3">
    <location>
        <begin position="1"/>
        <end position="190"/>
    </location>
</feature>
<name>IF3_PROMS</name>
<gene>
    <name evidence="1" type="primary">infC</name>
    <name type="ordered locus">A9601_18461</name>
</gene>
<reference key="1">
    <citation type="journal article" date="2007" name="PLoS Genet.">
        <title>Patterns and implications of gene gain and loss in the evolution of Prochlorococcus.</title>
        <authorList>
            <person name="Kettler G.C."/>
            <person name="Martiny A.C."/>
            <person name="Huang K."/>
            <person name="Zucker J."/>
            <person name="Coleman M.L."/>
            <person name="Rodrigue S."/>
            <person name="Chen F."/>
            <person name="Lapidus A."/>
            <person name="Ferriera S."/>
            <person name="Johnson J."/>
            <person name="Steglich C."/>
            <person name="Church G.M."/>
            <person name="Richardson P."/>
            <person name="Chisholm S.W."/>
        </authorList>
    </citation>
    <scope>NUCLEOTIDE SEQUENCE [LARGE SCALE GENOMIC DNA]</scope>
    <source>
        <strain>AS9601</strain>
    </source>
</reference>
<evidence type="ECO:0000255" key="1">
    <source>
        <dbReference type="HAMAP-Rule" id="MF_00080"/>
    </source>
</evidence>
<keyword id="KW-0963">Cytoplasm</keyword>
<keyword id="KW-0396">Initiation factor</keyword>
<keyword id="KW-0648">Protein biosynthesis</keyword>
<protein>
    <recommendedName>
        <fullName evidence="1">Translation initiation factor IF-3</fullName>
    </recommendedName>
</protein>
<organism>
    <name type="scientific">Prochlorococcus marinus (strain AS9601)</name>
    <dbReference type="NCBI Taxonomy" id="146891"/>
    <lineage>
        <taxon>Bacteria</taxon>
        <taxon>Bacillati</taxon>
        <taxon>Cyanobacteriota</taxon>
        <taxon>Cyanophyceae</taxon>
        <taxon>Synechococcales</taxon>
        <taxon>Prochlorococcaceae</taxon>
        <taxon>Prochlorococcus</taxon>
    </lineage>
</organism>
<accession>A2BTL8</accession>
<comment type="function">
    <text evidence="1">IF-3 binds to the 30S ribosomal subunit and shifts the equilibrium between 70S ribosomes and their 50S and 30S subunits in favor of the free subunits, thus enhancing the availability of 30S subunits on which protein synthesis initiation begins.</text>
</comment>
<comment type="subunit">
    <text evidence="1">Monomer.</text>
</comment>
<comment type="subcellular location">
    <subcellularLocation>
        <location evidence="1">Cytoplasm</location>
    </subcellularLocation>
</comment>
<comment type="similarity">
    <text evidence="1">Belongs to the IF-3 family.</text>
</comment>
<proteinExistence type="inferred from homology"/>
<dbReference type="EMBL" id="CP000551">
    <property type="protein sequence ID" value="ABM71129.1"/>
    <property type="molecule type" value="Genomic_DNA"/>
</dbReference>
<dbReference type="RefSeq" id="WP_011819248.1">
    <property type="nucleotide sequence ID" value="NC_008816.1"/>
</dbReference>
<dbReference type="SMR" id="A2BTL8"/>
<dbReference type="STRING" id="146891.A9601_18461"/>
<dbReference type="KEGG" id="pmb:A9601_18461"/>
<dbReference type="eggNOG" id="COG0290">
    <property type="taxonomic scope" value="Bacteria"/>
</dbReference>
<dbReference type="HOGENOM" id="CLU_054919_3_2_3"/>
<dbReference type="OrthoDB" id="9806014at2"/>
<dbReference type="Proteomes" id="UP000002590">
    <property type="component" value="Chromosome"/>
</dbReference>
<dbReference type="GO" id="GO:0005829">
    <property type="term" value="C:cytosol"/>
    <property type="evidence" value="ECO:0007669"/>
    <property type="project" value="TreeGrafter"/>
</dbReference>
<dbReference type="GO" id="GO:0016020">
    <property type="term" value="C:membrane"/>
    <property type="evidence" value="ECO:0007669"/>
    <property type="project" value="TreeGrafter"/>
</dbReference>
<dbReference type="GO" id="GO:0043022">
    <property type="term" value="F:ribosome binding"/>
    <property type="evidence" value="ECO:0007669"/>
    <property type="project" value="TreeGrafter"/>
</dbReference>
<dbReference type="GO" id="GO:0003743">
    <property type="term" value="F:translation initiation factor activity"/>
    <property type="evidence" value="ECO:0007669"/>
    <property type="project" value="UniProtKB-UniRule"/>
</dbReference>
<dbReference type="GO" id="GO:0032790">
    <property type="term" value="P:ribosome disassembly"/>
    <property type="evidence" value="ECO:0007669"/>
    <property type="project" value="TreeGrafter"/>
</dbReference>
<dbReference type="FunFam" id="3.10.20.80:FF:000001">
    <property type="entry name" value="Translation initiation factor IF-3"/>
    <property type="match status" value="1"/>
</dbReference>
<dbReference type="FunFam" id="3.30.110.10:FF:000001">
    <property type="entry name" value="Translation initiation factor IF-3"/>
    <property type="match status" value="1"/>
</dbReference>
<dbReference type="Gene3D" id="3.30.110.10">
    <property type="entry name" value="Translation initiation factor 3 (IF-3), C-terminal domain"/>
    <property type="match status" value="1"/>
</dbReference>
<dbReference type="Gene3D" id="3.10.20.80">
    <property type="entry name" value="Translation initiation factor 3 (IF-3), N-terminal domain"/>
    <property type="match status" value="1"/>
</dbReference>
<dbReference type="HAMAP" id="MF_00080">
    <property type="entry name" value="IF_3"/>
    <property type="match status" value="1"/>
</dbReference>
<dbReference type="InterPro" id="IPR036788">
    <property type="entry name" value="T_IF-3_C_sf"/>
</dbReference>
<dbReference type="InterPro" id="IPR036787">
    <property type="entry name" value="T_IF-3_N_sf"/>
</dbReference>
<dbReference type="InterPro" id="IPR019813">
    <property type="entry name" value="Translation_initiation_fac3_CS"/>
</dbReference>
<dbReference type="InterPro" id="IPR001288">
    <property type="entry name" value="Translation_initiation_fac_3"/>
</dbReference>
<dbReference type="InterPro" id="IPR019815">
    <property type="entry name" value="Translation_initiation_fac_3_C"/>
</dbReference>
<dbReference type="InterPro" id="IPR019814">
    <property type="entry name" value="Translation_initiation_fac_3_N"/>
</dbReference>
<dbReference type="NCBIfam" id="TIGR00168">
    <property type="entry name" value="infC"/>
    <property type="match status" value="1"/>
</dbReference>
<dbReference type="PANTHER" id="PTHR10938">
    <property type="entry name" value="TRANSLATION INITIATION FACTOR IF-3"/>
    <property type="match status" value="1"/>
</dbReference>
<dbReference type="PANTHER" id="PTHR10938:SF0">
    <property type="entry name" value="TRANSLATION INITIATION FACTOR IF-3, MITOCHONDRIAL"/>
    <property type="match status" value="1"/>
</dbReference>
<dbReference type="Pfam" id="PF00707">
    <property type="entry name" value="IF3_C"/>
    <property type="match status" value="1"/>
</dbReference>
<dbReference type="Pfam" id="PF05198">
    <property type="entry name" value="IF3_N"/>
    <property type="match status" value="1"/>
</dbReference>
<dbReference type="SUPFAM" id="SSF55200">
    <property type="entry name" value="Translation initiation factor IF3, C-terminal domain"/>
    <property type="match status" value="1"/>
</dbReference>
<dbReference type="SUPFAM" id="SSF54364">
    <property type="entry name" value="Translation initiation factor IF3, N-terminal domain"/>
    <property type="match status" value="1"/>
</dbReference>
<dbReference type="PROSITE" id="PS00938">
    <property type="entry name" value="IF3"/>
    <property type="match status" value="1"/>
</dbReference>
<sequence length="190" mass="22229">MPPRPRFDRRAPVRELPNINERIKYPQLRVVDSDGKQLGVIDRLKALEIASQRELDLVLVSEKANPPVCRIMDYGKYKFEQEKKAKEARKKSHQTEVKEVKMRYKIDKHDYDVRIGQATKFLKSGDKVKCTVIFRGREIQHSNLAETLLLKMANDLEEQSEVQQKPKREGRNMIMFLSPRKTPLIKKDDG</sequence>